<dbReference type="EMBL" id="BX936398">
    <property type="protein sequence ID" value="CAH22419.1"/>
    <property type="molecule type" value="Genomic_DNA"/>
</dbReference>
<dbReference type="RefSeq" id="WP_002209948.1">
    <property type="nucleotide sequence ID" value="NZ_CP009712.1"/>
</dbReference>
<dbReference type="SMR" id="Q666R6"/>
<dbReference type="GeneID" id="57973734"/>
<dbReference type="KEGG" id="ypo:BZ17_3430"/>
<dbReference type="KEGG" id="yps:YPTB3181"/>
<dbReference type="PATRIC" id="fig|273123.14.peg.3599"/>
<dbReference type="Proteomes" id="UP000001011">
    <property type="component" value="Chromosome"/>
</dbReference>
<dbReference type="GO" id="GO:0005829">
    <property type="term" value="C:cytosol"/>
    <property type="evidence" value="ECO:0007669"/>
    <property type="project" value="TreeGrafter"/>
</dbReference>
<dbReference type="GO" id="GO:0005960">
    <property type="term" value="C:glycine cleavage complex"/>
    <property type="evidence" value="ECO:0007669"/>
    <property type="project" value="InterPro"/>
</dbReference>
<dbReference type="GO" id="GO:0019464">
    <property type="term" value="P:glycine decarboxylation via glycine cleavage system"/>
    <property type="evidence" value="ECO:0007669"/>
    <property type="project" value="UniProtKB-UniRule"/>
</dbReference>
<dbReference type="CDD" id="cd06848">
    <property type="entry name" value="GCS_H"/>
    <property type="match status" value="1"/>
</dbReference>
<dbReference type="FunFam" id="2.40.50.100:FF:000011">
    <property type="entry name" value="Glycine cleavage system H protein"/>
    <property type="match status" value="1"/>
</dbReference>
<dbReference type="Gene3D" id="2.40.50.100">
    <property type="match status" value="1"/>
</dbReference>
<dbReference type="HAMAP" id="MF_00272">
    <property type="entry name" value="GcvH"/>
    <property type="match status" value="1"/>
</dbReference>
<dbReference type="InterPro" id="IPR003016">
    <property type="entry name" value="2-oxoA_DH_lipoyl-BS"/>
</dbReference>
<dbReference type="InterPro" id="IPR000089">
    <property type="entry name" value="Biotin_lipoyl"/>
</dbReference>
<dbReference type="InterPro" id="IPR002930">
    <property type="entry name" value="GCV_H"/>
</dbReference>
<dbReference type="InterPro" id="IPR033753">
    <property type="entry name" value="GCV_H/Fam206"/>
</dbReference>
<dbReference type="InterPro" id="IPR017453">
    <property type="entry name" value="GCV_H_sub"/>
</dbReference>
<dbReference type="InterPro" id="IPR011053">
    <property type="entry name" value="Single_hybrid_motif"/>
</dbReference>
<dbReference type="NCBIfam" id="TIGR00527">
    <property type="entry name" value="gcvH"/>
    <property type="match status" value="1"/>
</dbReference>
<dbReference type="NCBIfam" id="NF002270">
    <property type="entry name" value="PRK01202.1"/>
    <property type="match status" value="1"/>
</dbReference>
<dbReference type="PANTHER" id="PTHR11715">
    <property type="entry name" value="GLYCINE CLEAVAGE SYSTEM H PROTEIN"/>
    <property type="match status" value="1"/>
</dbReference>
<dbReference type="PANTHER" id="PTHR11715:SF3">
    <property type="entry name" value="GLYCINE CLEAVAGE SYSTEM H PROTEIN-RELATED"/>
    <property type="match status" value="1"/>
</dbReference>
<dbReference type="Pfam" id="PF01597">
    <property type="entry name" value="GCV_H"/>
    <property type="match status" value="1"/>
</dbReference>
<dbReference type="SUPFAM" id="SSF51230">
    <property type="entry name" value="Single hybrid motif"/>
    <property type="match status" value="1"/>
</dbReference>
<dbReference type="PROSITE" id="PS50968">
    <property type="entry name" value="BIOTINYL_LIPOYL"/>
    <property type="match status" value="1"/>
</dbReference>
<dbReference type="PROSITE" id="PS00189">
    <property type="entry name" value="LIPOYL"/>
    <property type="match status" value="1"/>
</dbReference>
<proteinExistence type="inferred from homology"/>
<feature type="chain" id="PRO_0000302470" description="Glycine cleavage system H protein">
    <location>
        <begin position="1"/>
        <end position="128"/>
    </location>
</feature>
<feature type="domain" description="Lipoyl-binding" evidence="2">
    <location>
        <begin position="24"/>
        <end position="106"/>
    </location>
</feature>
<feature type="modified residue" description="N6-lipoyllysine" evidence="1">
    <location>
        <position position="65"/>
    </location>
</feature>
<accession>Q666R6</accession>
<gene>
    <name evidence="1" type="primary">gcvH</name>
    <name type="ordered locus">YPTB3181</name>
</gene>
<comment type="function">
    <text evidence="1">The glycine cleavage system catalyzes the degradation of glycine. The H protein shuttles the methylamine group of glycine from the P protein to the T protein.</text>
</comment>
<comment type="cofactor">
    <cofactor evidence="1">
        <name>(R)-lipoate</name>
        <dbReference type="ChEBI" id="CHEBI:83088"/>
    </cofactor>
    <text evidence="1">Binds 1 lipoyl cofactor covalently.</text>
</comment>
<comment type="subunit">
    <text evidence="1">The glycine cleavage system is composed of four proteins: P, T, L and H.</text>
</comment>
<comment type="similarity">
    <text evidence="1">Belongs to the GcvH family.</text>
</comment>
<reference key="1">
    <citation type="journal article" date="2004" name="Proc. Natl. Acad. Sci. U.S.A.">
        <title>Insights into the evolution of Yersinia pestis through whole-genome comparison with Yersinia pseudotuberculosis.</title>
        <authorList>
            <person name="Chain P.S.G."/>
            <person name="Carniel E."/>
            <person name="Larimer F.W."/>
            <person name="Lamerdin J."/>
            <person name="Stoutland P.O."/>
            <person name="Regala W.M."/>
            <person name="Georgescu A.M."/>
            <person name="Vergez L.M."/>
            <person name="Land M.L."/>
            <person name="Motin V.L."/>
            <person name="Brubaker R.R."/>
            <person name="Fowler J."/>
            <person name="Hinnebusch J."/>
            <person name="Marceau M."/>
            <person name="Medigue C."/>
            <person name="Simonet M."/>
            <person name="Chenal-Francisque V."/>
            <person name="Souza B."/>
            <person name="Dacheux D."/>
            <person name="Elliott J.M."/>
            <person name="Derbise A."/>
            <person name="Hauser L.J."/>
            <person name="Garcia E."/>
        </authorList>
    </citation>
    <scope>NUCLEOTIDE SEQUENCE [LARGE SCALE GENOMIC DNA]</scope>
    <source>
        <strain>IP32953</strain>
    </source>
</reference>
<organism>
    <name type="scientific">Yersinia pseudotuberculosis serotype I (strain IP32953)</name>
    <dbReference type="NCBI Taxonomy" id="273123"/>
    <lineage>
        <taxon>Bacteria</taxon>
        <taxon>Pseudomonadati</taxon>
        <taxon>Pseudomonadota</taxon>
        <taxon>Gammaproteobacteria</taxon>
        <taxon>Enterobacterales</taxon>
        <taxon>Yersiniaceae</taxon>
        <taxon>Yersinia</taxon>
    </lineage>
</organism>
<keyword id="KW-0450">Lipoyl</keyword>
<sequence>MSNVPTELKYALSHEWVRADGDGVYSVGITEHAQELLGDMVFVDLPEVGSDVSAGSDCAVAESVKAASDIYAPISGEIVAVNTELENSPELVNSAPYTDGWLFSIKAADESELDNLLDADAYLAAIEE</sequence>
<protein>
    <recommendedName>
        <fullName evidence="1">Glycine cleavage system H protein</fullName>
    </recommendedName>
</protein>
<evidence type="ECO:0000255" key="1">
    <source>
        <dbReference type="HAMAP-Rule" id="MF_00272"/>
    </source>
</evidence>
<evidence type="ECO:0000255" key="2">
    <source>
        <dbReference type="PROSITE-ProRule" id="PRU01066"/>
    </source>
</evidence>
<name>GCSH_YERPS</name>